<comment type="function">
    <text>Participates in the surface-dependent activation of blood coagulation. Activates, in a reciprocal reaction, coagulation factor XII/F12 after binding to negatively charged surfaces. Releases bradykinin from HMW kininogen and may also play a role in the renin-angiotensin system by converting prorenin into renin.</text>
</comment>
<comment type="catalytic activity">
    <reaction>
        <text>Cleaves selectively Arg-|-Xaa and Lys-|-Xaa bonds, including Lys-|-Arg and Arg-|-Ser bonds in (human) kininogen to release bradykinin.</text>
        <dbReference type="EC" id="3.4.21.34"/>
    </reaction>
</comment>
<comment type="activity regulation">
    <text evidence="12">Inhibited by SERPINA5.</text>
</comment>
<comment type="subunit">
    <text evidence="13 16">Forms a heterodimer with SERPINA5. The zymogen is activated by factor XIIa, which cleaves the molecule into a light chain, which contains the active site, and a heavy chain, which associates with HMW kininogen. These chains are linked by one or more disulfide bonds. Interacts with iripin-3, a serine protease inhibitor from Ixodes ricinus saliva (PubMed:33732248). Interacts with iripin-1, a serine protease inhibitor from Ixodes ricinus saliva (PubMed:36756125).</text>
</comment>
<comment type="interaction">
    <interactant intactId="EBI-10087153">
        <id>P03952</id>
    </interactant>
    <interactant intactId="EBI-2340132">
        <id>Q9UI10</id>
        <label>EIF2B4</label>
    </interactant>
    <organismsDiffer>false</organismsDiffer>
    <experiments>3</experiments>
</comment>
<comment type="interaction">
    <interactant intactId="EBI-10087153">
        <id>P03952</id>
    </interactant>
    <interactant intactId="EBI-744871">
        <id>O00746</id>
        <label>NME4</label>
    </interactant>
    <organismsDiffer>false</organismsDiffer>
    <experiments>3</experiments>
</comment>
<comment type="interaction">
    <interactant intactId="EBI-10087153">
        <id>P03952</id>
    </interactant>
    <interactant intactId="EBI-25830675">
        <id>C9J082</id>
        <label>NPHP1</label>
    </interactant>
    <organismsDiffer>false</organismsDiffer>
    <experiments>3</experiments>
</comment>
<comment type="interaction">
    <interactant intactId="EBI-10087153">
        <id>P03952</id>
    </interactant>
    <interactant intactId="EBI-351098">
        <id>O14744</id>
        <label>PRMT5</label>
    </interactant>
    <organismsDiffer>false</organismsDiffer>
    <experiments>3</experiments>
</comment>
<comment type="interaction">
    <interactant intactId="EBI-10087153">
        <id>P03952</id>
    </interactant>
    <interactant intactId="EBI-10272071">
        <id>Q8TAS3</id>
        <label>PRRG2</label>
    </interactant>
    <organismsDiffer>false</organismsDiffer>
    <experiments>3</experiments>
</comment>
<comment type="interaction">
    <interactant intactId="EBI-10087153">
        <id>P03952</id>
    </interactant>
    <interactant intactId="EBI-750973">
        <id>O00233</id>
        <label>PSMD9</label>
    </interactant>
    <organismsDiffer>false</organismsDiffer>
    <experiments>3</experiments>
</comment>
<comment type="interaction">
    <interactant intactId="EBI-10087153">
        <id>P03952</id>
    </interactant>
    <interactant intactId="EBI-2822550">
        <id>Q8IYM2</id>
        <label>SLFN12</label>
    </interactant>
    <organismsDiffer>false</organismsDiffer>
    <experiments>3</experiments>
</comment>
<comment type="interaction">
    <interactant intactId="EBI-10087153">
        <id>P03952</id>
    </interactant>
    <interactant intactId="EBI-1752602">
        <id>Q9UMY4</id>
        <label>SNX12</label>
    </interactant>
    <organismsDiffer>false</organismsDiffer>
    <experiments>3</experiments>
</comment>
<comment type="interaction">
    <interactant intactId="EBI-10087153">
        <id>P03952</id>
    </interactant>
    <interactant intactId="EBI-25830716">
        <id>O43493-5</id>
        <label>TGOLN2</label>
    </interactant>
    <organismsDiffer>false</organismsDiffer>
    <experiments>3</experiments>
</comment>
<comment type="interaction">
    <interactant intactId="EBI-10087153">
        <id>P03952</id>
    </interactant>
    <interactant intactId="EBI-21757569">
        <id>Q8NFB2</id>
        <label>TMEM185A</label>
    </interactant>
    <organismsDiffer>false</organismsDiffer>
    <experiments>3</experiments>
</comment>
<comment type="interaction">
    <interactant intactId="EBI-10087153">
        <id>P03952</id>
    </interactant>
    <interactant intactId="EBI-11337915">
        <id>Q8N0U8</id>
        <label>VKORC1L1</label>
    </interactant>
    <organismsDiffer>false</organismsDiffer>
    <experiments>3</experiments>
</comment>
<comment type="subcellular location">
    <subcellularLocation>
        <location>Secreted</location>
    </subcellularLocation>
</comment>
<comment type="tissue specificity">
    <text evidence="5 9">Found in plasma (at protein level).</text>
</comment>
<comment type="disease" evidence="5 9 14">
    <disease id="DI-02188">
        <name>Prekallikrein deficiency</name>
        <acronym>PKKD</acronym>
        <description>An autosomal recessive condition characterized by a clotting defect due to prolongation of activated partial thromboplastin time. Affected individuals are clinically asymptomatic.</description>
        <dbReference type="MIM" id="612423"/>
    </disease>
    <text>The disease is caused by variants affecting the gene represented in this entry.</text>
</comment>
<comment type="similarity">
    <text evidence="1">Belongs to the peptidase S1 family. Plasma kallikrein subfamily.</text>
</comment>
<dbReference type="EC" id="3.4.21.34"/>
<dbReference type="EMBL" id="M13143">
    <property type="protein sequence ID" value="AAA60153.1"/>
    <property type="molecule type" value="mRNA"/>
</dbReference>
<dbReference type="EMBL" id="AF232742">
    <property type="protein sequence ID" value="AAF79940.1"/>
    <property type="molecule type" value="Genomic_DNA"/>
</dbReference>
<dbReference type="EMBL" id="AF232734">
    <property type="protein sequence ID" value="AAF79940.1"/>
    <property type="status" value="JOINED"/>
    <property type="molecule type" value="Genomic_DNA"/>
</dbReference>
<dbReference type="EMBL" id="AF232735">
    <property type="protein sequence ID" value="AAF79940.1"/>
    <property type="status" value="JOINED"/>
    <property type="molecule type" value="Genomic_DNA"/>
</dbReference>
<dbReference type="EMBL" id="AF232736">
    <property type="protein sequence ID" value="AAF79940.1"/>
    <property type="status" value="JOINED"/>
    <property type="molecule type" value="Genomic_DNA"/>
</dbReference>
<dbReference type="EMBL" id="AF232737">
    <property type="protein sequence ID" value="AAF79940.1"/>
    <property type="status" value="JOINED"/>
    <property type="molecule type" value="Genomic_DNA"/>
</dbReference>
<dbReference type="EMBL" id="AF232738">
    <property type="protein sequence ID" value="AAF79940.1"/>
    <property type="status" value="JOINED"/>
    <property type="molecule type" value="Genomic_DNA"/>
</dbReference>
<dbReference type="EMBL" id="AF232739">
    <property type="protein sequence ID" value="AAF79940.1"/>
    <property type="status" value="JOINED"/>
    <property type="molecule type" value="Genomic_DNA"/>
</dbReference>
<dbReference type="EMBL" id="AF232740">
    <property type="protein sequence ID" value="AAF79940.1"/>
    <property type="status" value="JOINED"/>
    <property type="molecule type" value="Genomic_DNA"/>
</dbReference>
<dbReference type="EMBL" id="AF232741">
    <property type="protein sequence ID" value="AAF79940.1"/>
    <property type="status" value="JOINED"/>
    <property type="molecule type" value="Genomic_DNA"/>
</dbReference>
<dbReference type="EMBL" id="AK313378">
    <property type="protein sequence ID" value="BAG36176.1"/>
    <property type="molecule type" value="mRNA"/>
</dbReference>
<dbReference type="EMBL" id="AY190920">
    <property type="protein sequence ID" value="AAN84794.1"/>
    <property type="molecule type" value="Genomic_DNA"/>
</dbReference>
<dbReference type="EMBL" id="AC110771">
    <property type="protein sequence ID" value="AAY40900.1"/>
    <property type="molecule type" value="Genomic_DNA"/>
</dbReference>
<dbReference type="EMBL" id="CH471056">
    <property type="protein sequence ID" value="EAX04623.1"/>
    <property type="molecule type" value="Genomic_DNA"/>
</dbReference>
<dbReference type="EMBL" id="BC117349">
    <property type="protein sequence ID" value="AAI17350.1"/>
    <property type="molecule type" value="mRNA"/>
</dbReference>
<dbReference type="EMBL" id="BC117351">
    <property type="protein sequence ID" value="AAI17352.1"/>
    <property type="molecule type" value="mRNA"/>
</dbReference>
<dbReference type="CCDS" id="CCDS34120.1"/>
<dbReference type="PIR" id="A00921">
    <property type="entry name" value="KQHUP"/>
</dbReference>
<dbReference type="RefSeq" id="NP_000883.2">
    <property type="nucleotide sequence ID" value="NM_000892.5"/>
</dbReference>
<dbReference type="RefSeq" id="XP_047271617.1">
    <property type="nucleotide sequence ID" value="XM_047415661.1"/>
</dbReference>
<dbReference type="PDB" id="2ANW">
    <property type="method" value="X-ray"/>
    <property type="resolution" value="1.85 A"/>
    <property type="chains" value="A=391-631"/>
</dbReference>
<dbReference type="PDB" id="2ANY">
    <property type="method" value="X-ray"/>
    <property type="resolution" value="1.40 A"/>
    <property type="chains" value="A=391-631"/>
</dbReference>
<dbReference type="PDB" id="4OGX">
    <property type="method" value="X-ray"/>
    <property type="resolution" value="2.40 A"/>
    <property type="chains" value="A=391-631"/>
</dbReference>
<dbReference type="PDB" id="4OGY">
    <property type="method" value="X-ray"/>
    <property type="resolution" value="2.10 A"/>
    <property type="chains" value="A/B=391-631"/>
</dbReference>
<dbReference type="PDB" id="5F8T">
    <property type="method" value="X-ray"/>
    <property type="resolution" value="1.75 A"/>
    <property type="chains" value="A=391-629"/>
</dbReference>
<dbReference type="PDB" id="5F8X">
    <property type="method" value="X-ray"/>
    <property type="resolution" value="1.55 A"/>
    <property type="chains" value="A=391-629"/>
</dbReference>
<dbReference type="PDB" id="5F8Z">
    <property type="method" value="X-ray"/>
    <property type="resolution" value="1.50 A"/>
    <property type="chains" value="A=391-629"/>
</dbReference>
<dbReference type="PDB" id="5TJX">
    <property type="method" value="X-ray"/>
    <property type="resolution" value="1.41 A"/>
    <property type="chains" value="A=376-638"/>
</dbReference>
<dbReference type="PDB" id="6I44">
    <property type="method" value="X-ray"/>
    <property type="resolution" value="1.36 A"/>
    <property type="chains" value="A=20-638"/>
</dbReference>
<dbReference type="PDB" id="6O1G">
    <property type="method" value="X-ray"/>
    <property type="resolution" value="2.20 A"/>
    <property type="chains" value="A=1-638"/>
</dbReference>
<dbReference type="PDB" id="6O1S">
    <property type="method" value="X-ray"/>
    <property type="resolution" value="1.70 A"/>
    <property type="chains" value="E=376-638"/>
</dbReference>
<dbReference type="PDB" id="6T7P">
    <property type="method" value="X-ray"/>
    <property type="resolution" value="1.42 A"/>
    <property type="chains" value="A=391-632"/>
</dbReference>
<dbReference type="PDB" id="7N7X">
    <property type="method" value="X-ray"/>
    <property type="resolution" value="2.10 A"/>
    <property type="chains" value="AAA=391-626"/>
</dbReference>
<dbReference type="PDB" id="7QOX">
    <property type="method" value="X-ray"/>
    <property type="resolution" value="2.32 A"/>
    <property type="chains" value="A/B=20-378"/>
</dbReference>
<dbReference type="PDB" id="8A3Q">
    <property type="method" value="X-ray"/>
    <property type="resolution" value="1.80 A"/>
    <property type="chains" value="A=376-638"/>
</dbReference>
<dbReference type="PDB" id="8FGX">
    <property type="method" value="EM"/>
    <property type="resolution" value="2.62 A"/>
    <property type="chains" value="C=20-638"/>
</dbReference>
<dbReference type="PDBsum" id="2ANW"/>
<dbReference type="PDBsum" id="2ANY"/>
<dbReference type="PDBsum" id="4OGX"/>
<dbReference type="PDBsum" id="4OGY"/>
<dbReference type="PDBsum" id="5F8T"/>
<dbReference type="PDBsum" id="5F8X"/>
<dbReference type="PDBsum" id="5F8Z"/>
<dbReference type="PDBsum" id="5TJX"/>
<dbReference type="PDBsum" id="6I44"/>
<dbReference type="PDBsum" id="6O1G"/>
<dbReference type="PDBsum" id="6O1S"/>
<dbReference type="PDBsum" id="6T7P"/>
<dbReference type="PDBsum" id="7N7X"/>
<dbReference type="PDBsum" id="7QOX"/>
<dbReference type="PDBsum" id="8A3Q"/>
<dbReference type="PDBsum" id="8FGX"/>
<dbReference type="EMDB" id="EMD-29077"/>
<dbReference type="SMR" id="P03952"/>
<dbReference type="BioGRID" id="110018">
    <property type="interactions" value="10"/>
</dbReference>
<dbReference type="ComplexPortal" id="CPX-6234">
    <property type="entry name" value="Kallikrein complex"/>
</dbReference>
<dbReference type="FunCoup" id="P03952">
    <property type="interactions" value="213"/>
</dbReference>
<dbReference type="IntAct" id="P03952">
    <property type="interactions" value="21"/>
</dbReference>
<dbReference type="STRING" id="9606.ENSP00000264690"/>
<dbReference type="BindingDB" id="P03952"/>
<dbReference type="ChEMBL" id="CHEMBL2000"/>
<dbReference type="DrugBank" id="DB15982">
    <property type="generic name" value="Berotralstat"/>
</dbReference>
<dbReference type="DrugBank" id="DB09228">
    <property type="generic name" value="Conestat alfa"/>
</dbReference>
<dbReference type="DrugBank" id="DB05311">
    <property type="generic name" value="Ecallantide"/>
</dbReference>
<dbReference type="DrugBank" id="DB12831">
    <property type="generic name" value="Gabexate"/>
</dbReference>
<dbReference type="DrugBank" id="DB06404">
    <property type="generic name" value="Human C1-esterase inhibitor"/>
</dbReference>
<dbReference type="DrugBank" id="DB14597">
    <property type="generic name" value="Lanadelumab"/>
</dbReference>
<dbReference type="DrugBank" id="DB01593">
    <property type="generic name" value="Zinc"/>
</dbReference>
<dbReference type="DrugBank" id="DB14487">
    <property type="generic name" value="Zinc acetate"/>
</dbReference>
<dbReference type="DrugBank" id="DB14533">
    <property type="generic name" value="Zinc chloride"/>
</dbReference>
<dbReference type="DrugBank" id="DB14548">
    <property type="generic name" value="Zinc sulfate, unspecified form"/>
</dbReference>
<dbReference type="DrugCentral" id="P03952"/>
<dbReference type="GuidetoPHARMACOLOGY" id="2379"/>
<dbReference type="MEROPS" id="S01.212"/>
<dbReference type="GlyConnect" id="714">
    <property type="glycosylation" value="19 N-Linked glycans (8 sites)"/>
</dbReference>
<dbReference type="GlyCosmos" id="P03952">
    <property type="glycosylation" value="8 sites, 21 glycans"/>
</dbReference>
<dbReference type="GlyGen" id="P03952">
    <property type="glycosylation" value="10 sites, 48 N-linked glycans (8 sites), 1 O-linked glycan (1 site)"/>
</dbReference>
<dbReference type="iPTMnet" id="P03952"/>
<dbReference type="PhosphoSitePlus" id="P03952"/>
<dbReference type="BioMuta" id="KLKB1"/>
<dbReference type="DMDM" id="125184"/>
<dbReference type="CPTAC" id="CPTAC-682"/>
<dbReference type="CPTAC" id="CPTAC-683"/>
<dbReference type="jPOST" id="P03952"/>
<dbReference type="MassIVE" id="P03952"/>
<dbReference type="PaxDb" id="9606-ENSP00000264690"/>
<dbReference type="PeptideAtlas" id="P03952"/>
<dbReference type="ProteomicsDB" id="51622"/>
<dbReference type="ABCD" id="P03952">
    <property type="antibodies" value="1 sequenced antibody"/>
</dbReference>
<dbReference type="Antibodypedia" id="850">
    <property type="antibodies" value="397 antibodies from 37 providers"/>
</dbReference>
<dbReference type="DNASU" id="3818"/>
<dbReference type="Ensembl" id="ENST00000264690.11">
    <property type="protein sequence ID" value="ENSP00000264690.6"/>
    <property type="gene ID" value="ENSG00000164344.17"/>
</dbReference>
<dbReference type="GeneID" id="3818"/>
<dbReference type="KEGG" id="hsa:3818"/>
<dbReference type="MANE-Select" id="ENST00000264690.11">
    <property type="protein sequence ID" value="ENSP00000264690.6"/>
    <property type="RefSeq nucleotide sequence ID" value="NM_000892.5"/>
    <property type="RefSeq protein sequence ID" value="NP_000883.2"/>
</dbReference>
<dbReference type="UCSC" id="uc003iyy.4">
    <property type="organism name" value="human"/>
</dbReference>
<dbReference type="AGR" id="HGNC:6371"/>
<dbReference type="CTD" id="3818"/>
<dbReference type="DisGeNET" id="3818"/>
<dbReference type="GeneCards" id="KLKB1"/>
<dbReference type="HGNC" id="HGNC:6371">
    <property type="gene designation" value="KLKB1"/>
</dbReference>
<dbReference type="HPA" id="ENSG00000164344">
    <property type="expression patterns" value="Tissue enriched (liver)"/>
</dbReference>
<dbReference type="MalaCards" id="KLKB1"/>
<dbReference type="MIM" id="229000">
    <property type="type" value="gene"/>
</dbReference>
<dbReference type="MIM" id="612423">
    <property type="type" value="phenotype"/>
</dbReference>
<dbReference type="neXtProt" id="NX_P03952"/>
<dbReference type="OpenTargets" id="ENSG00000164344"/>
<dbReference type="Orphanet" id="749">
    <property type="disease" value="Congenital prekallikrein deficiency"/>
</dbReference>
<dbReference type="PharmGKB" id="PA30160"/>
<dbReference type="VEuPathDB" id="HostDB:ENSG00000164344"/>
<dbReference type="eggNOG" id="KOG3627">
    <property type="taxonomic scope" value="Eukaryota"/>
</dbReference>
<dbReference type="GeneTree" id="ENSGT00940000161669"/>
<dbReference type="HOGENOM" id="CLU_031604_0_0_1"/>
<dbReference type="InParanoid" id="P03952"/>
<dbReference type="OMA" id="TAMYTPN"/>
<dbReference type="OrthoDB" id="9448935at2759"/>
<dbReference type="PAN-GO" id="P03952">
    <property type="GO annotations" value="0 GO annotations based on evolutionary models"/>
</dbReference>
<dbReference type="PhylomeDB" id="P03952"/>
<dbReference type="TreeFam" id="TF343687"/>
<dbReference type="BRENDA" id="3.4.21.34">
    <property type="organism ID" value="2681"/>
</dbReference>
<dbReference type="PathwayCommons" id="P03952"/>
<dbReference type="Reactome" id="R-HSA-140837">
    <property type="pathway name" value="Intrinsic Pathway of Fibrin Clot Formation"/>
</dbReference>
<dbReference type="Reactome" id="R-HSA-1592389">
    <property type="pathway name" value="Activation of Matrix Metalloproteinases"/>
</dbReference>
<dbReference type="Reactome" id="R-HSA-9657688">
    <property type="pathway name" value="Defective factor XII causes hereditary angioedema"/>
</dbReference>
<dbReference type="Reactome" id="R-HSA-9657689">
    <property type="pathway name" value="Defective SERPING1 causes hereditary angioedema"/>
</dbReference>
<dbReference type="SABIO-RK" id="P03952"/>
<dbReference type="SignaLink" id="P03952"/>
<dbReference type="SIGNOR" id="P03952"/>
<dbReference type="BioGRID-ORCS" id="3818">
    <property type="hits" value="13 hits in 1154 CRISPR screens"/>
</dbReference>
<dbReference type="ChiTaRS" id="KLKB1">
    <property type="organism name" value="human"/>
</dbReference>
<dbReference type="EvolutionaryTrace" id="P03952"/>
<dbReference type="GeneWiki" id="KLKB1"/>
<dbReference type="GenomeRNAi" id="3818"/>
<dbReference type="Pharos" id="P03952">
    <property type="development level" value="Tclin"/>
</dbReference>
<dbReference type="PRO" id="PR:P03952"/>
<dbReference type="Proteomes" id="UP000005640">
    <property type="component" value="Chromosome 4"/>
</dbReference>
<dbReference type="RNAct" id="P03952">
    <property type="molecule type" value="protein"/>
</dbReference>
<dbReference type="Bgee" id="ENSG00000164344">
    <property type="expression patterns" value="Expressed in right lobe of liver and 125 other cell types or tissues"/>
</dbReference>
<dbReference type="ExpressionAtlas" id="P03952">
    <property type="expression patterns" value="baseline and differential"/>
</dbReference>
<dbReference type="GO" id="GO:0070062">
    <property type="term" value="C:extracellular exosome"/>
    <property type="evidence" value="ECO:0007005"/>
    <property type="project" value="UniProtKB"/>
</dbReference>
<dbReference type="GO" id="GO:0005576">
    <property type="term" value="C:extracellular region"/>
    <property type="evidence" value="ECO:0000304"/>
    <property type="project" value="Reactome"/>
</dbReference>
<dbReference type="GO" id="GO:0005615">
    <property type="term" value="C:extracellular space"/>
    <property type="evidence" value="ECO:0000314"/>
    <property type="project" value="BHF-UCL"/>
</dbReference>
<dbReference type="GO" id="GO:0005886">
    <property type="term" value="C:plasma membrane"/>
    <property type="evidence" value="ECO:0000304"/>
    <property type="project" value="Reactome"/>
</dbReference>
<dbReference type="GO" id="GO:0004252">
    <property type="term" value="F:serine-type endopeptidase activity"/>
    <property type="evidence" value="ECO:0000304"/>
    <property type="project" value="ProtInc"/>
</dbReference>
<dbReference type="GO" id="GO:0007596">
    <property type="term" value="P:blood coagulation"/>
    <property type="evidence" value="ECO:0007669"/>
    <property type="project" value="UniProtKB-KW"/>
</dbReference>
<dbReference type="GO" id="GO:0002542">
    <property type="term" value="P:Factor XII activation"/>
    <property type="evidence" value="ECO:0000304"/>
    <property type="project" value="BHF-UCL"/>
</dbReference>
<dbReference type="GO" id="GO:0042730">
    <property type="term" value="P:fibrinolysis"/>
    <property type="evidence" value="ECO:0007669"/>
    <property type="project" value="UniProtKB-KW"/>
</dbReference>
<dbReference type="GO" id="GO:0031639">
    <property type="term" value="P:plasminogen activation"/>
    <property type="evidence" value="ECO:0000314"/>
    <property type="project" value="BHF-UCL"/>
</dbReference>
<dbReference type="GO" id="GO:0051919">
    <property type="term" value="P:positive regulation of fibrinolysis"/>
    <property type="evidence" value="ECO:0000314"/>
    <property type="project" value="BHF-UCL"/>
</dbReference>
<dbReference type="GO" id="GO:0006508">
    <property type="term" value="P:proteolysis"/>
    <property type="evidence" value="ECO:0000304"/>
    <property type="project" value="ProtInc"/>
</dbReference>
<dbReference type="GO" id="GO:0031638">
    <property type="term" value="P:zymogen activation"/>
    <property type="evidence" value="ECO:0000304"/>
    <property type="project" value="BHF-UCL"/>
</dbReference>
<dbReference type="CDD" id="cd01100">
    <property type="entry name" value="APPLE_Factor_XI_like"/>
    <property type="match status" value="4"/>
</dbReference>
<dbReference type="CDD" id="cd00190">
    <property type="entry name" value="Tryp_SPc"/>
    <property type="match status" value="1"/>
</dbReference>
<dbReference type="FunFam" id="3.50.4.10:FF:000001">
    <property type="entry name" value="Coagulation factor XI"/>
    <property type="match status" value="4"/>
</dbReference>
<dbReference type="FunFam" id="2.40.10.10:FF:000003">
    <property type="entry name" value="Transmembrane serine protease 3"/>
    <property type="match status" value="1"/>
</dbReference>
<dbReference type="Gene3D" id="3.50.4.10">
    <property type="entry name" value="Hepatocyte Growth Factor"/>
    <property type="match status" value="4"/>
</dbReference>
<dbReference type="Gene3D" id="2.40.10.10">
    <property type="entry name" value="Trypsin-like serine proteases"/>
    <property type="match status" value="1"/>
</dbReference>
<dbReference type="InterPro" id="IPR000177">
    <property type="entry name" value="Apple"/>
</dbReference>
<dbReference type="InterPro" id="IPR003609">
    <property type="entry name" value="Pan_app"/>
</dbReference>
<dbReference type="InterPro" id="IPR009003">
    <property type="entry name" value="Peptidase_S1_PA"/>
</dbReference>
<dbReference type="InterPro" id="IPR043504">
    <property type="entry name" value="Peptidase_S1_PA_chymotrypsin"/>
</dbReference>
<dbReference type="InterPro" id="IPR001314">
    <property type="entry name" value="Peptidase_S1A"/>
</dbReference>
<dbReference type="InterPro" id="IPR001254">
    <property type="entry name" value="Trypsin_dom"/>
</dbReference>
<dbReference type="InterPro" id="IPR018114">
    <property type="entry name" value="TRYPSIN_HIS"/>
</dbReference>
<dbReference type="InterPro" id="IPR033116">
    <property type="entry name" value="TRYPSIN_SER"/>
</dbReference>
<dbReference type="PANTHER" id="PTHR24252">
    <property type="entry name" value="ACROSIN-RELATED"/>
    <property type="match status" value="1"/>
</dbReference>
<dbReference type="PANTHER" id="PTHR24252:SF27">
    <property type="entry name" value="TRANSMEMBRANE PROTEASE SERINE 3-LIKE"/>
    <property type="match status" value="1"/>
</dbReference>
<dbReference type="Pfam" id="PF00024">
    <property type="entry name" value="PAN_1"/>
    <property type="match status" value="4"/>
</dbReference>
<dbReference type="Pfam" id="PF00089">
    <property type="entry name" value="Trypsin"/>
    <property type="match status" value="1"/>
</dbReference>
<dbReference type="PRINTS" id="PR00005">
    <property type="entry name" value="APPLEDOMAIN"/>
</dbReference>
<dbReference type="PRINTS" id="PR00722">
    <property type="entry name" value="CHYMOTRYPSIN"/>
</dbReference>
<dbReference type="SMART" id="SM00223">
    <property type="entry name" value="APPLE"/>
    <property type="match status" value="4"/>
</dbReference>
<dbReference type="SMART" id="SM00020">
    <property type="entry name" value="Tryp_SPc"/>
    <property type="match status" value="1"/>
</dbReference>
<dbReference type="SUPFAM" id="SSF50494">
    <property type="entry name" value="Trypsin-like serine proteases"/>
    <property type="match status" value="1"/>
</dbReference>
<dbReference type="PROSITE" id="PS00495">
    <property type="entry name" value="APPLE"/>
    <property type="match status" value="4"/>
</dbReference>
<dbReference type="PROSITE" id="PS50948">
    <property type="entry name" value="PAN"/>
    <property type="match status" value="4"/>
</dbReference>
<dbReference type="PROSITE" id="PS50240">
    <property type="entry name" value="TRYPSIN_DOM"/>
    <property type="match status" value="1"/>
</dbReference>
<dbReference type="PROSITE" id="PS00134">
    <property type="entry name" value="TRYPSIN_HIS"/>
    <property type="match status" value="1"/>
</dbReference>
<dbReference type="PROSITE" id="PS00135">
    <property type="entry name" value="TRYPSIN_SER"/>
    <property type="match status" value="1"/>
</dbReference>
<accession>P03952</accession>
<accession>A6NH96</accession>
<accession>B2R8H9</accession>
<accession>Q17RE8</accession>
<accession>Q17RE9</accession>
<accession>Q4W5C3</accession>
<gene>
    <name type="primary">KLKB1</name>
    <name type="synonym">KLK3</name>
</gene>
<proteinExistence type="evidence at protein level"/>
<feature type="signal peptide">
    <location>
        <begin position="1"/>
        <end position="19"/>
    </location>
</feature>
<feature type="chain" id="PRO_0000028021" description="Plasma kallikrein heavy chain">
    <location>
        <begin position="20"/>
        <end position="390"/>
    </location>
</feature>
<feature type="chain" id="PRO_0000028022" description="Plasma kallikrein light chain">
    <location>
        <begin position="391"/>
        <end position="638"/>
    </location>
</feature>
<feature type="domain" description="Apple 1" evidence="2">
    <location>
        <begin position="21"/>
        <end position="104"/>
    </location>
</feature>
<feature type="domain" description="Apple 2" evidence="2">
    <location>
        <begin position="111"/>
        <end position="194"/>
    </location>
</feature>
<feature type="domain" description="Apple 3" evidence="2">
    <location>
        <begin position="201"/>
        <end position="284"/>
    </location>
</feature>
<feature type="domain" description="Apple 4" evidence="2">
    <location>
        <begin position="292"/>
        <end position="375"/>
    </location>
</feature>
<feature type="domain" description="Peptidase S1" evidence="1">
    <location>
        <begin position="391"/>
        <end position="626"/>
    </location>
</feature>
<feature type="active site" description="Charge relay system">
    <location>
        <position position="434"/>
    </location>
</feature>
<feature type="active site" description="Charge relay system">
    <location>
        <position position="483"/>
    </location>
</feature>
<feature type="active site" description="Charge relay system">
    <location>
        <position position="578"/>
    </location>
</feature>
<feature type="glycosylation site" description="N-linked (GlcNAc...) asparagine" evidence="8 15">
    <location>
        <position position="127"/>
    </location>
</feature>
<feature type="glycosylation site" description="N-linked (GlcNAc...) asparagine" evidence="8 10 15">
    <location>
        <position position="308"/>
    </location>
</feature>
<feature type="glycosylation site" description="N-linked (GlcNAc...) asparagine" evidence="8 10 15">
    <location>
        <position position="396"/>
    </location>
</feature>
<feature type="glycosylation site" description="N-linked (GlcNAc...) asparagine" evidence="4 8 10 15">
    <location>
        <position position="453"/>
    </location>
</feature>
<feature type="glycosylation site" description="N-linked (GlcNAc...) asparagine" evidence="8 10 15">
    <location>
        <position position="494"/>
    </location>
</feature>
<feature type="disulfide bond" evidence="11">
    <location>
        <begin position="21"/>
        <end position="104"/>
    </location>
</feature>
<feature type="disulfide bond" evidence="11">
    <location>
        <begin position="47"/>
        <end position="77"/>
    </location>
</feature>
<feature type="disulfide bond" evidence="11">
    <location>
        <begin position="51"/>
        <end position="57"/>
    </location>
</feature>
<feature type="disulfide bond" evidence="11">
    <location>
        <begin position="111"/>
        <end position="194"/>
    </location>
</feature>
<feature type="disulfide bond" evidence="11">
    <location>
        <begin position="137"/>
        <end position="166"/>
    </location>
</feature>
<feature type="disulfide bond" evidence="11">
    <location>
        <begin position="141"/>
        <end position="147"/>
    </location>
</feature>
<feature type="disulfide bond" evidence="11">
    <location>
        <begin position="201"/>
        <end position="284"/>
    </location>
</feature>
<feature type="disulfide bond" evidence="11">
    <location>
        <begin position="227"/>
        <end position="256"/>
    </location>
</feature>
<feature type="disulfide bond" evidence="11">
    <location>
        <begin position="231"/>
        <end position="237"/>
    </location>
</feature>
<feature type="disulfide bond" evidence="11">
    <location>
        <begin position="292"/>
        <end position="375"/>
    </location>
</feature>
<feature type="disulfide bond" evidence="11">
    <location>
        <begin position="318"/>
        <end position="347"/>
    </location>
</feature>
<feature type="disulfide bond" evidence="11">
    <location>
        <begin position="322"/>
        <end position="328"/>
    </location>
</feature>
<feature type="disulfide bond" evidence="11">
    <location>
        <begin position="340"/>
        <end position="345"/>
    </location>
</feature>
<feature type="disulfide bond" evidence="11">
    <location>
        <begin position="383"/>
        <end position="503"/>
    </location>
</feature>
<feature type="disulfide bond" evidence="11">
    <location>
        <begin position="419"/>
        <end position="435"/>
    </location>
</feature>
<feature type="disulfide bond" evidence="11">
    <location>
        <begin position="517"/>
        <end position="584"/>
    </location>
</feature>
<feature type="disulfide bond" evidence="11">
    <location>
        <begin position="548"/>
        <end position="563"/>
    </location>
</feature>
<feature type="disulfide bond" evidence="11">
    <location>
        <begin position="574"/>
        <end position="602"/>
    </location>
</feature>
<feature type="sequence variant" id="VAR_054907" description="In PKKD; uncertain significance; dbSNP:rs121964952." evidence="9">
    <original>G</original>
    <variation>R</variation>
    <location>
        <position position="123"/>
    </location>
</feature>
<feature type="sequence variant" id="VAR_013598" description="In dbSNP:rs3733402." evidence="3 6 7 9 15 17">
    <original>S</original>
    <variation>N</variation>
    <location>
        <position position="143"/>
    </location>
</feature>
<feature type="sequence variant" id="VAR_016280" description="In dbSNP:rs4253257." evidence="17">
    <original>A</original>
    <variation>T</variation>
    <location>
        <position position="178"/>
    </location>
</feature>
<feature type="sequence variant" id="VAR_013599" description="In dbSNP:rs4253373." evidence="3 17">
    <original>H</original>
    <variation>Q</variation>
    <location>
        <position position="202"/>
    </location>
</feature>
<feature type="sequence variant" id="VAR_013600" description="In dbSNP:rs145640112." evidence="3">
    <original>H</original>
    <variation>P</variation>
    <location>
        <position position="208"/>
    </location>
</feature>
<feature type="sequence variant" id="VAR_020180" description="In dbSNP:rs2278542.">
    <original>A</original>
    <variation>E</variation>
    <location>
        <position position="210"/>
    </location>
</feature>
<feature type="sequence variant" id="VAR_016281" description="In dbSNP:rs4253376." evidence="17">
    <original>S</original>
    <variation>C</variation>
    <location>
        <position position="269"/>
    </location>
</feature>
<feature type="sequence variant" id="VAR_016282" description="In dbSNP:rs4253377." evidence="17">
    <original>F</original>
    <variation>V</variation>
    <location>
        <position position="311"/>
    </location>
</feature>
<feature type="sequence variant" id="VAR_016283" description="In dbSNP:rs4253379." evidence="17">
    <original>T</original>
    <variation>A</variation>
    <location>
        <position position="358"/>
    </location>
</feature>
<feature type="sequence variant" id="VAR_016284" description="In dbSNP:rs4253301." evidence="17">
    <original>S</original>
    <variation>A</variation>
    <location>
        <position position="381"/>
    </location>
</feature>
<feature type="sequence variant" id="VAR_088604" description="In PKKD; likely pathogenic; may strongly affect protein expression." evidence="5">
    <location>
        <begin position="402"/>
        <end position="638"/>
    </location>
</feature>
<feature type="sequence variant" id="VAR_016285" description="In dbSNP:rs4253316." evidence="17">
    <original>Q</original>
    <variation>P</variation>
    <location>
        <position position="442"/>
    </location>
</feature>
<feature type="sequence variant" id="VAR_054908" description="In PKKD; likely pathogenic; may strongly affect protein expression; dbSNP:rs121964951." evidence="5">
    <original>C</original>
    <variation>Y</variation>
    <location>
        <position position="548"/>
    </location>
</feature>
<feature type="sequence variant" id="VAR_016286" description="In dbSNP:rs4253325." evidence="7 17">
    <original>R</original>
    <variation>Q</variation>
    <location>
        <position position="560"/>
    </location>
</feature>
<feature type="strand" evidence="21">
    <location>
        <begin position="25"/>
        <end position="31"/>
    </location>
</feature>
<feature type="strand" evidence="21">
    <location>
        <begin position="35"/>
        <end position="40"/>
    </location>
</feature>
<feature type="helix" evidence="21">
    <location>
        <begin position="44"/>
        <end position="53"/>
    </location>
</feature>
<feature type="strand" evidence="21">
    <location>
        <begin position="54"/>
        <end position="56"/>
    </location>
</feature>
<feature type="strand" evidence="21">
    <location>
        <begin position="59"/>
        <end position="63"/>
    </location>
</feature>
<feature type="helix" evidence="21">
    <location>
        <begin position="65"/>
        <end position="67"/>
    </location>
</feature>
<feature type="turn" evidence="21">
    <location>
        <begin position="71"/>
        <end position="75"/>
    </location>
</feature>
<feature type="strand" evidence="21">
    <location>
        <begin position="76"/>
        <end position="80"/>
    </location>
</feature>
<feature type="strand" evidence="21">
    <location>
        <begin position="89"/>
        <end position="99"/>
    </location>
</feature>
<feature type="helix" evidence="21">
    <location>
        <begin position="105"/>
        <end position="107"/>
    </location>
</feature>
<feature type="strand" evidence="21">
    <location>
        <begin position="116"/>
        <end position="130"/>
    </location>
</feature>
<feature type="helix" evidence="21">
    <location>
        <begin position="134"/>
        <end position="142"/>
    </location>
</feature>
<feature type="strand" evidence="21">
    <location>
        <begin position="148"/>
        <end position="153"/>
    </location>
</feature>
<feature type="helix" evidence="21">
    <location>
        <begin position="160"/>
        <end position="162"/>
    </location>
</feature>
<feature type="strand" evidence="21">
    <location>
        <begin position="165"/>
        <end position="170"/>
    </location>
</feature>
<feature type="helix" evidence="21">
    <location>
        <begin position="172"/>
        <end position="174"/>
    </location>
</feature>
<feature type="strand" evidence="21">
    <location>
        <begin position="177"/>
        <end position="189"/>
    </location>
</feature>
<feature type="helix" evidence="21">
    <location>
        <begin position="192"/>
        <end position="194"/>
    </location>
</feature>
<feature type="strand" evidence="21">
    <location>
        <begin position="206"/>
        <end position="210"/>
    </location>
</feature>
<feature type="strand" evidence="21">
    <location>
        <begin position="213"/>
        <end position="220"/>
    </location>
</feature>
<feature type="helix" evidence="21">
    <location>
        <begin position="224"/>
        <end position="233"/>
    </location>
</feature>
<feature type="strand" evidence="21">
    <location>
        <begin position="238"/>
        <end position="243"/>
    </location>
</feature>
<feature type="helix" evidence="21">
    <location>
        <begin position="250"/>
        <end position="252"/>
    </location>
</feature>
<feature type="strand" evidence="21">
    <location>
        <begin position="255"/>
        <end position="260"/>
    </location>
</feature>
<feature type="strand" evidence="22">
    <location>
        <begin position="262"/>
        <end position="265"/>
    </location>
</feature>
<feature type="strand" evidence="21">
    <location>
        <begin position="270"/>
        <end position="279"/>
    </location>
</feature>
<feature type="strand" evidence="22">
    <location>
        <begin position="301"/>
        <end position="303"/>
    </location>
</feature>
<feature type="strand" evidence="21">
    <location>
        <begin position="305"/>
        <end position="314"/>
    </location>
</feature>
<feature type="helix" evidence="21">
    <location>
        <begin position="315"/>
        <end position="324"/>
    </location>
</feature>
<feature type="strand" evidence="21">
    <location>
        <begin position="330"/>
        <end position="334"/>
    </location>
</feature>
<feature type="helix" evidence="21">
    <location>
        <begin position="337"/>
        <end position="339"/>
    </location>
</feature>
<feature type="strand" evidence="22">
    <location>
        <begin position="340"/>
        <end position="343"/>
    </location>
</feature>
<feature type="strand" evidence="21">
    <location>
        <begin position="345"/>
        <end position="351"/>
    </location>
</feature>
<feature type="strand" evidence="21">
    <location>
        <begin position="353"/>
        <end position="356"/>
    </location>
</feature>
<feature type="strand" evidence="22">
    <location>
        <begin position="358"/>
        <end position="363"/>
    </location>
</feature>
<feature type="strand" evidence="21">
    <location>
        <begin position="365"/>
        <end position="370"/>
    </location>
</feature>
<feature type="turn" evidence="19">
    <location>
        <begin position="399"/>
        <end position="401"/>
    </location>
</feature>
<feature type="strand" evidence="21">
    <location>
        <begin position="405"/>
        <end position="425"/>
    </location>
</feature>
<feature type="strand" evidence="21">
    <location>
        <begin position="428"/>
        <end position="431"/>
    </location>
</feature>
<feature type="helix" evidence="21">
    <location>
        <begin position="433"/>
        <end position="436"/>
    </location>
</feature>
<feature type="helix" evidence="21">
    <location>
        <begin position="442"/>
        <end position="444"/>
    </location>
</feature>
<feature type="strand" evidence="21">
    <location>
        <begin position="445"/>
        <end position="448"/>
    </location>
</feature>
<feature type="helix" evidence="21">
    <location>
        <begin position="454"/>
        <end position="456"/>
    </location>
</feature>
<feature type="strand" evidence="21">
    <location>
        <begin position="466"/>
        <end position="471"/>
    </location>
</feature>
<feature type="strand" evidence="18">
    <location>
        <begin position="479"/>
        <end position="482"/>
    </location>
</feature>
<feature type="strand" evidence="21">
    <location>
        <begin position="485"/>
        <end position="491"/>
    </location>
</feature>
<feature type="strand" evidence="24">
    <location>
        <begin position="497"/>
        <end position="499"/>
    </location>
</feature>
<feature type="helix" evidence="19">
    <location>
        <begin position="507"/>
        <end position="509"/>
    </location>
</feature>
<feature type="helix" evidence="23">
    <location>
        <begin position="511"/>
        <end position="513"/>
    </location>
</feature>
<feature type="strand" evidence="21">
    <location>
        <begin position="517"/>
        <end position="523"/>
    </location>
</feature>
<feature type="strand" evidence="24">
    <location>
        <begin position="524"/>
        <end position="526"/>
    </location>
</feature>
<feature type="strand" evidence="21">
    <location>
        <begin position="536"/>
        <end position="539"/>
    </location>
</feature>
<feature type="helix" evidence="21">
    <location>
        <begin position="545"/>
        <end position="551"/>
    </location>
</feature>
<feature type="turn" evidence="20">
    <location>
        <begin position="552"/>
        <end position="554"/>
    </location>
</feature>
<feature type="strand" evidence="21">
    <location>
        <begin position="561"/>
        <end position="564"/>
    </location>
</feature>
<feature type="strand" evidence="21">
    <location>
        <begin position="581"/>
        <end position="586"/>
    </location>
</feature>
<feature type="strand" evidence="21">
    <location>
        <begin position="589"/>
        <end position="598"/>
    </location>
</feature>
<feature type="strand" evidence="21">
    <location>
        <begin position="600"/>
        <end position="603"/>
    </location>
</feature>
<feature type="strand" evidence="21">
    <location>
        <begin position="609"/>
        <end position="613"/>
    </location>
</feature>
<feature type="helix" evidence="21">
    <location>
        <begin position="614"/>
        <end position="617"/>
    </location>
</feature>
<feature type="helix" evidence="21">
    <location>
        <begin position="618"/>
        <end position="628"/>
    </location>
</feature>
<evidence type="ECO:0000255" key="1">
    <source>
        <dbReference type="PROSITE-ProRule" id="PRU00274"/>
    </source>
</evidence>
<evidence type="ECO:0000255" key="2">
    <source>
        <dbReference type="PROSITE-ProRule" id="PRU00315"/>
    </source>
</evidence>
<evidence type="ECO:0000269" key="3">
    <source>
    </source>
</evidence>
<evidence type="ECO:0000269" key="4">
    <source>
    </source>
</evidence>
<evidence type="ECO:0000269" key="5">
    <source>
    </source>
</evidence>
<evidence type="ECO:0000269" key="6">
    <source>
    </source>
</evidence>
<evidence type="ECO:0000269" key="7">
    <source>
    </source>
</evidence>
<evidence type="ECO:0000269" key="8">
    <source>
    </source>
</evidence>
<evidence type="ECO:0000269" key="9">
    <source>
    </source>
</evidence>
<evidence type="ECO:0000269" key="10">
    <source>
    </source>
</evidence>
<evidence type="ECO:0000269" key="11">
    <source>
    </source>
</evidence>
<evidence type="ECO:0000269" key="12">
    <source>
    </source>
</evidence>
<evidence type="ECO:0000269" key="13">
    <source>
    </source>
</evidence>
<evidence type="ECO:0000269" key="14">
    <source>
    </source>
</evidence>
<evidence type="ECO:0000269" key="15">
    <source>
    </source>
</evidence>
<evidence type="ECO:0000269" key="16">
    <source>
    </source>
</evidence>
<evidence type="ECO:0000269" key="17">
    <source ref="4"/>
</evidence>
<evidence type="ECO:0007829" key="18">
    <source>
        <dbReference type="PDB" id="2ANY"/>
    </source>
</evidence>
<evidence type="ECO:0007829" key="19">
    <source>
        <dbReference type="PDB" id="4OGY"/>
    </source>
</evidence>
<evidence type="ECO:0007829" key="20">
    <source>
        <dbReference type="PDB" id="5TJX"/>
    </source>
</evidence>
<evidence type="ECO:0007829" key="21">
    <source>
        <dbReference type="PDB" id="6I44"/>
    </source>
</evidence>
<evidence type="ECO:0007829" key="22">
    <source>
        <dbReference type="PDB" id="6O1G"/>
    </source>
</evidence>
<evidence type="ECO:0007829" key="23">
    <source>
        <dbReference type="PDB" id="6T7P"/>
    </source>
</evidence>
<evidence type="ECO:0007829" key="24">
    <source>
        <dbReference type="PDB" id="8A3Q"/>
    </source>
</evidence>
<keyword id="KW-0002">3D-structure</keyword>
<keyword id="KW-0094">Blood coagulation</keyword>
<keyword id="KW-0903">Direct protein sequencing</keyword>
<keyword id="KW-0225">Disease variant</keyword>
<keyword id="KW-1015">Disulfide bond</keyword>
<keyword id="KW-0280">Fibrinolysis</keyword>
<keyword id="KW-0325">Glycoprotein</keyword>
<keyword id="KW-0356">Hemostasis</keyword>
<keyword id="KW-0378">Hydrolase</keyword>
<keyword id="KW-0395">Inflammatory response</keyword>
<keyword id="KW-0645">Protease</keyword>
<keyword id="KW-1267">Proteomics identification</keyword>
<keyword id="KW-1185">Reference proteome</keyword>
<keyword id="KW-0677">Repeat</keyword>
<keyword id="KW-0964">Secreted</keyword>
<keyword id="KW-0720">Serine protease</keyword>
<keyword id="KW-0732">Signal</keyword>
<keyword id="KW-0865">Zymogen</keyword>
<sequence length="638" mass="71343">MILFKQATYFISLFATVSCGCLTQLYENAFFRGGDVASMYTPNAQYCQMRCTFHPRCLLFSFLPASSINDMEKRFGCFLKDSVTGTLPKVHRTGAVSGHSLKQCGHQISACHRDIYKGVDMRGVNFNVSKVSSVEECQKRCTSNIRCQFFSYATQTFHKAEYRNNCLLKYSPGGTPTAIKVLSNVESGFSLKPCALSEIGCHMNIFQHLAFSDVDVARVLTPDAFVCRTICTYHPNCLFFTFYTNVWKIESQRNVCLLKTSESGTPSSSTPQENTISGYSLLTCKRTLPEPCHSKIYPGVDFGGEELNVTFVKGVNVCQETCTKMIRCQFFTYSLLPEDCKEEKCKCFLRLSMDGSPTRIAYGTQGSSGYSLRLCNTGDNSVCTTKTSTRIVGGTNSSWGEWPWQVSLQVKLTAQRHLCGGSLIGHQWVLTAAHCFDGLPLQDVWRIYSGILNLSDITKDTPFSQIKEIIIHQNYKVSEGNHDIALIKLQAPLNYTEFQKPICLPSKGDTSTIYTNCWVTGWGFSKEKGEIQNILQKVNIPLVTNEECQKRYQDYKITQRMVCAGYKEGGKDACKGDSGGPLVCKHNGMWRLVGITSWGEGCARREQPGVYTKVAEYMDWILEKTQSSDGKAQMQSPA</sequence>
<reference key="1">
    <citation type="journal article" date="1986" name="Biochemistry">
        <title>Human plasma prekallikrein, a zymogen to a serine protease that contains four tandem repeats.</title>
        <authorList>
            <person name="Chung D.W."/>
            <person name="Fujikawa K."/>
            <person name="McMullen B.A."/>
            <person name="Davie E.W."/>
        </authorList>
    </citation>
    <scope>NUCLEOTIDE SEQUENCE [MRNA]</scope>
    <scope>VARIANT ASN-143</scope>
</reference>
<reference key="2">
    <citation type="journal article" date="2000" name="Genomics">
        <title>Genomic structure of the human plasma prekallikrein gene, identification of allelic variants, and analysis in end-stage renal disease.</title>
        <authorList>
            <person name="Yu H."/>
            <person name="Anderson P.J."/>
            <person name="Freedman B.I."/>
            <person name="Rich S.S."/>
            <person name="Bowden D.W."/>
        </authorList>
    </citation>
    <scope>NUCLEOTIDE SEQUENCE [GENOMIC DNA]</scope>
    <scope>VARIANTS ASN-143; GLN-202 AND PRO-208</scope>
</reference>
<reference key="3">
    <citation type="journal article" date="2004" name="Nat. Genet.">
        <title>Complete sequencing and characterization of 21,243 full-length human cDNAs.</title>
        <authorList>
            <person name="Ota T."/>
            <person name="Suzuki Y."/>
            <person name="Nishikawa T."/>
            <person name="Otsuki T."/>
            <person name="Sugiyama T."/>
            <person name="Irie R."/>
            <person name="Wakamatsu A."/>
            <person name="Hayashi K."/>
            <person name="Sato H."/>
            <person name="Nagai K."/>
            <person name="Kimura K."/>
            <person name="Makita H."/>
            <person name="Sekine M."/>
            <person name="Obayashi M."/>
            <person name="Nishi T."/>
            <person name="Shibahara T."/>
            <person name="Tanaka T."/>
            <person name="Ishii S."/>
            <person name="Yamamoto J."/>
            <person name="Saito K."/>
            <person name="Kawai Y."/>
            <person name="Isono Y."/>
            <person name="Nakamura Y."/>
            <person name="Nagahari K."/>
            <person name="Murakami K."/>
            <person name="Yasuda T."/>
            <person name="Iwayanagi T."/>
            <person name="Wagatsuma M."/>
            <person name="Shiratori A."/>
            <person name="Sudo H."/>
            <person name="Hosoiri T."/>
            <person name="Kaku Y."/>
            <person name="Kodaira H."/>
            <person name="Kondo H."/>
            <person name="Sugawara M."/>
            <person name="Takahashi M."/>
            <person name="Kanda K."/>
            <person name="Yokoi T."/>
            <person name="Furuya T."/>
            <person name="Kikkawa E."/>
            <person name="Omura Y."/>
            <person name="Abe K."/>
            <person name="Kamihara K."/>
            <person name="Katsuta N."/>
            <person name="Sato K."/>
            <person name="Tanikawa M."/>
            <person name="Yamazaki M."/>
            <person name="Ninomiya K."/>
            <person name="Ishibashi T."/>
            <person name="Yamashita H."/>
            <person name="Murakawa K."/>
            <person name="Fujimori K."/>
            <person name="Tanai H."/>
            <person name="Kimata M."/>
            <person name="Watanabe M."/>
            <person name="Hiraoka S."/>
            <person name="Chiba Y."/>
            <person name="Ishida S."/>
            <person name="Ono Y."/>
            <person name="Takiguchi S."/>
            <person name="Watanabe S."/>
            <person name="Yosida M."/>
            <person name="Hotuta T."/>
            <person name="Kusano J."/>
            <person name="Kanehori K."/>
            <person name="Takahashi-Fujii A."/>
            <person name="Hara H."/>
            <person name="Tanase T.-O."/>
            <person name="Nomura Y."/>
            <person name="Togiya S."/>
            <person name="Komai F."/>
            <person name="Hara R."/>
            <person name="Takeuchi K."/>
            <person name="Arita M."/>
            <person name="Imose N."/>
            <person name="Musashino K."/>
            <person name="Yuuki H."/>
            <person name="Oshima A."/>
            <person name="Sasaki N."/>
            <person name="Aotsuka S."/>
            <person name="Yoshikawa Y."/>
            <person name="Matsunawa H."/>
            <person name="Ichihara T."/>
            <person name="Shiohata N."/>
            <person name="Sano S."/>
            <person name="Moriya S."/>
            <person name="Momiyama H."/>
            <person name="Satoh N."/>
            <person name="Takami S."/>
            <person name="Terashima Y."/>
            <person name="Suzuki O."/>
            <person name="Nakagawa S."/>
            <person name="Senoh A."/>
            <person name="Mizoguchi H."/>
            <person name="Goto Y."/>
            <person name="Shimizu F."/>
            <person name="Wakebe H."/>
            <person name="Hishigaki H."/>
            <person name="Watanabe T."/>
            <person name="Sugiyama A."/>
            <person name="Takemoto M."/>
            <person name="Kawakami B."/>
            <person name="Yamazaki M."/>
            <person name="Watanabe K."/>
            <person name="Kumagai A."/>
            <person name="Itakura S."/>
            <person name="Fukuzumi Y."/>
            <person name="Fujimori Y."/>
            <person name="Komiyama M."/>
            <person name="Tashiro H."/>
            <person name="Tanigami A."/>
            <person name="Fujiwara T."/>
            <person name="Ono T."/>
            <person name="Yamada K."/>
            <person name="Fujii Y."/>
            <person name="Ozaki K."/>
            <person name="Hirao M."/>
            <person name="Ohmori Y."/>
            <person name="Kawabata A."/>
            <person name="Hikiji T."/>
            <person name="Kobatake N."/>
            <person name="Inagaki H."/>
            <person name="Ikema Y."/>
            <person name="Okamoto S."/>
            <person name="Okitani R."/>
            <person name="Kawakami T."/>
            <person name="Noguchi S."/>
            <person name="Itoh T."/>
            <person name="Shigeta K."/>
            <person name="Senba T."/>
            <person name="Matsumura K."/>
            <person name="Nakajima Y."/>
            <person name="Mizuno T."/>
            <person name="Morinaga M."/>
            <person name="Sasaki M."/>
            <person name="Togashi T."/>
            <person name="Oyama M."/>
            <person name="Hata H."/>
            <person name="Watanabe M."/>
            <person name="Komatsu T."/>
            <person name="Mizushima-Sugano J."/>
            <person name="Satoh T."/>
            <person name="Shirai Y."/>
            <person name="Takahashi Y."/>
            <person name="Nakagawa K."/>
            <person name="Okumura K."/>
            <person name="Nagase T."/>
            <person name="Nomura N."/>
            <person name="Kikuchi H."/>
            <person name="Masuho Y."/>
            <person name="Yamashita R."/>
            <person name="Nakai K."/>
            <person name="Yada T."/>
            <person name="Nakamura Y."/>
            <person name="Ohara O."/>
            <person name="Isogai T."/>
            <person name="Sugano S."/>
        </authorList>
    </citation>
    <scope>NUCLEOTIDE SEQUENCE [LARGE SCALE MRNA]</scope>
    <scope>VARIANT ASN-143</scope>
    <source>
        <tissue>Liver</tissue>
    </source>
</reference>
<reference key="4">
    <citation type="submission" date="2002-12" db="EMBL/GenBank/DDBJ databases">
        <authorList>
            <consortium name="SeattleSNPs variation discovery resource"/>
        </authorList>
    </citation>
    <scope>NUCLEOTIDE SEQUENCE [GENOMIC DNA]</scope>
    <scope>VARIANTS ASN-143; THR-178; GLN-202; CYS-269; VAL-311; ALA-358; ALA-381; PRO-442 AND GLN-560</scope>
</reference>
<reference key="5">
    <citation type="journal article" date="2005" name="Nature">
        <title>Generation and annotation of the DNA sequences of human chromosomes 2 and 4.</title>
        <authorList>
            <person name="Hillier L.W."/>
            <person name="Graves T.A."/>
            <person name="Fulton R.S."/>
            <person name="Fulton L.A."/>
            <person name="Pepin K.H."/>
            <person name="Minx P."/>
            <person name="Wagner-McPherson C."/>
            <person name="Layman D."/>
            <person name="Wylie K."/>
            <person name="Sekhon M."/>
            <person name="Becker M.C."/>
            <person name="Fewell G.A."/>
            <person name="Delehaunty K.D."/>
            <person name="Miner T.L."/>
            <person name="Nash W.E."/>
            <person name="Kremitzki C."/>
            <person name="Oddy L."/>
            <person name="Du H."/>
            <person name="Sun H."/>
            <person name="Bradshaw-Cordum H."/>
            <person name="Ali J."/>
            <person name="Carter J."/>
            <person name="Cordes M."/>
            <person name="Harris A."/>
            <person name="Isak A."/>
            <person name="van Brunt A."/>
            <person name="Nguyen C."/>
            <person name="Du F."/>
            <person name="Courtney L."/>
            <person name="Kalicki J."/>
            <person name="Ozersky P."/>
            <person name="Abbott S."/>
            <person name="Armstrong J."/>
            <person name="Belter E.A."/>
            <person name="Caruso L."/>
            <person name="Cedroni M."/>
            <person name="Cotton M."/>
            <person name="Davidson T."/>
            <person name="Desai A."/>
            <person name="Elliott G."/>
            <person name="Erb T."/>
            <person name="Fronick C."/>
            <person name="Gaige T."/>
            <person name="Haakenson W."/>
            <person name="Haglund K."/>
            <person name="Holmes A."/>
            <person name="Harkins R."/>
            <person name="Kim K."/>
            <person name="Kruchowski S.S."/>
            <person name="Strong C.M."/>
            <person name="Grewal N."/>
            <person name="Goyea E."/>
            <person name="Hou S."/>
            <person name="Levy A."/>
            <person name="Martinka S."/>
            <person name="Mead K."/>
            <person name="McLellan M.D."/>
            <person name="Meyer R."/>
            <person name="Randall-Maher J."/>
            <person name="Tomlinson C."/>
            <person name="Dauphin-Kohlberg S."/>
            <person name="Kozlowicz-Reilly A."/>
            <person name="Shah N."/>
            <person name="Swearengen-Shahid S."/>
            <person name="Snider J."/>
            <person name="Strong J.T."/>
            <person name="Thompson J."/>
            <person name="Yoakum M."/>
            <person name="Leonard S."/>
            <person name="Pearman C."/>
            <person name="Trani L."/>
            <person name="Radionenko M."/>
            <person name="Waligorski J.E."/>
            <person name="Wang C."/>
            <person name="Rock S.M."/>
            <person name="Tin-Wollam A.-M."/>
            <person name="Maupin R."/>
            <person name="Latreille P."/>
            <person name="Wendl M.C."/>
            <person name="Yang S.-P."/>
            <person name="Pohl C."/>
            <person name="Wallis J.W."/>
            <person name="Spieth J."/>
            <person name="Bieri T.A."/>
            <person name="Berkowicz N."/>
            <person name="Nelson J.O."/>
            <person name="Osborne J."/>
            <person name="Ding L."/>
            <person name="Meyer R."/>
            <person name="Sabo A."/>
            <person name="Shotland Y."/>
            <person name="Sinha P."/>
            <person name="Wohldmann P.E."/>
            <person name="Cook L.L."/>
            <person name="Hickenbotham M.T."/>
            <person name="Eldred J."/>
            <person name="Williams D."/>
            <person name="Jones T.A."/>
            <person name="She X."/>
            <person name="Ciccarelli F.D."/>
            <person name="Izaurralde E."/>
            <person name="Taylor J."/>
            <person name="Schmutz J."/>
            <person name="Myers R.M."/>
            <person name="Cox D.R."/>
            <person name="Huang X."/>
            <person name="McPherson J.D."/>
            <person name="Mardis E.R."/>
            <person name="Clifton S.W."/>
            <person name="Warren W.C."/>
            <person name="Chinwalla A.T."/>
            <person name="Eddy S.R."/>
            <person name="Marra M.A."/>
            <person name="Ovcharenko I."/>
            <person name="Furey T.S."/>
            <person name="Miller W."/>
            <person name="Eichler E.E."/>
            <person name="Bork P."/>
            <person name="Suyama M."/>
            <person name="Torrents D."/>
            <person name="Waterston R.H."/>
            <person name="Wilson R.K."/>
        </authorList>
    </citation>
    <scope>NUCLEOTIDE SEQUENCE [LARGE SCALE GENOMIC DNA]</scope>
</reference>
<reference key="6">
    <citation type="submission" date="2005-09" db="EMBL/GenBank/DDBJ databases">
        <authorList>
            <person name="Mural R.J."/>
            <person name="Istrail S."/>
            <person name="Sutton G.G."/>
            <person name="Florea L."/>
            <person name="Halpern A.L."/>
            <person name="Mobarry C.M."/>
            <person name="Lippert R."/>
            <person name="Walenz B."/>
            <person name="Shatkay H."/>
            <person name="Dew I."/>
            <person name="Miller J.R."/>
            <person name="Flanigan M.J."/>
            <person name="Edwards N.J."/>
            <person name="Bolanos R."/>
            <person name="Fasulo D."/>
            <person name="Halldorsson B.V."/>
            <person name="Hannenhalli S."/>
            <person name="Turner R."/>
            <person name="Yooseph S."/>
            <person name="Lu F."/>
            <person name="Nusskern D.R."/>
            <person name="Shue B.C."/>
            <person name="Zheng X.H."/>
            <person name="Zhong F."/>
            <person name="Delcher A.L."/>
            <person name="Huson D.H."/>
            <person name="Kravitz S.A."/>
            <person name="Mouchard L."/>
            <person name="Reinert K."/>
            <person name="Remington K.A."/>
            <person name="Clark A.G."/>
            <person name="Waterman M.S."/>
            <person name="Eichler E.E."/>
            <person name="Adams M.D."/>
            <person name="Hunkapiller M.W."/>
            <person name="Myers E.W."/>
            <person name="Venter J.C."/>
        </authorList>
    </citation>
    <scope>NUCLEOTIDE SEQUENCE [LARGE SCALE GENOMIC DNA]</scope>
</reference>
<reference key="7">
    <citation type="journal article" date="2004" name="Genome Res.">
        <title>The status, quality, and expansion of the NIH full-length cDNA project: the Mammalian Gene Collection (MGC).</title>
        <authorList>
            <consortium name="The MGC Project Team"/>
        </authorList>
    </citation>
    <scope>NUCLEOTIDE SEQUENCE [LARGE SCALE MRNA]</scope>
    <scope>VARIANTS ASN-143 AND GLN-560</scope>
    <source>
        <tissue>Colon</tissue>
    </source>
</reference>
<reference key="8">
    <citation type="journal article" date="1991" name="Biochemistry">
        <title>Location of the disulfide bonds in human plasma prekallikrein: the presence of four novel apple domains in the amino-terminal portion of the molecule.</title>
        <authorList>
            <person name="McMullen B.A."/>
            <person name="Fujikawa K."/>
            <person name="Davie E.W."/>
        </authorList>
    </citation>
    <scope>PARTIAL PROTEIN SEQUENCE</scope>
    <scope>DISULFIDE BONDS</scope>
</reference>
<reference key="9">
    <citation type="journal article" date="1988" name="Biochemistry">
        <title>Inactivation of human plasma kallikrein and factor XIa by protein C inhibitor.</title>
        <authorList>
            <person name="Meijers J.C."/>
            <person name="Kanters D.H."/>
            <person name="Vlooswijk R.A."/>
            <person name="van Erp H.E."/>
            <person name="Hessing M."/>
            <person name="Bouma B.N."/>
        </authorList>
    </citation>
    <scope>ACTIVITY REGULATION</scope>
    <scope>HETERODIMER WITH SERPINA5</scope>
</reference>
<reference key="10">
    <citation type="journal article" date="2003" name="Nat. Biotechnol.">
        <title>Identification and quantification of N-linked glycoproteins using hydrazide chemistry, stable isotope labeling and mass spectrometry.</title>
        <authorList>
            <person name="Zhang H."/>
            <person name="Li X.-J."/>
            <person name="Martin D.B."/>
            <person name="Aebersold R."/>
        </authorList>
    </citation>
    <scope>GLYCOSYLATION AT ASN-453</scope>
</reference>
<reference key="11">
    <citation type="journal article" date="2005" name="J. Proteome Res.">
        <title>Human plasma N-glycoproteome analysis by immunoaffinity subtraction, hydrazide chemistry, and mass spectrometry.</title>
        <authorList>
            <person name="Liu T."/>
            <person name="Qian W.-J."/>
            <person name="Gritsenko M.A."/>
            <person name="Camp D.G. II"/>
            <person name="Monroe M.E."/>
            <person name="Moore R.J."/>
            <person name="Smith R.D."/>
        </authorList>
    </citation>
    <scope>GLYCOSYLATION [LARGE SCALE ANALYSIS] AT ASN-127; ASN-308; ASN-396; ASN-453 AND ASN-494</scope>
    <source>
        <tissue>Plasma</tissue>
    </source>
</reference>
<reference key="12">
    <citation type="journal article" date="2009" name="J. Proteome Res.">
        <title>Glycoproteomics analysis of human liver tissue by combination of multiple enzyme digestion and hydrazide chemistry.</title>
        <authorList>
            <person name="Chen R."/>
            <person name="Jiang X."/>
            <person name="Sun D."/>
            <person name="Han G."/>
            <person name="Wang F."/>
            <person name="Ye M."/>
            <person name="Wang L."/>
            <person name="Zou H."/>
        </authorList>
    </citation>
    <scope>GLYCOSYLATION [LARGE SCALE ANALYSIS] AT ASN-308; ASN-396; ASN-453 AND ASN-494</scope>
    <source>
        <tissue>Liver</tissue>
    </source>
</reference>
<reference key="13">
    <citation type="journal article" date="2021" name="Front. Immunol.">
        <title>Iripin-3, a New Salivary Protein Isolated From Ixodes ricinus Ticks, Displays Immunomodulatory and Anti-Hemostatic Properties In Vitro.</title>
        <authorList>
            <person name="Chlastakova A."/>
            <person name="Kotal J."/>
            <person name="Berankova Z."/>
            <person name="Kascakova B."/>
            <person name="Martins L.A."/>
            <person name="Langhansova H."/>
            <person name="Prudnikova T."/>
            <person name="Ederova M."/>
            <person name="Kuta Smatanova I."/>
            <person name="Kotsyfakis M."/>
            <person name="Chmelar J."/>
        </authorList>
    </citation>
    <scope>INTERACTION WITH TICK IRIPIN-3</scope>
</reference>
<reference key="14">
    <citation type="journal article" date="2023" name="Front. Immunol.">
        <title>Iripin-1, a new anti-inflammatory tick serpin, inhibits leukocyte recruitment &lt;i&gt;in vivo&lt;/i&gt; while altering the levels of chemokines and adhesion molecules.</title>
        <authorList>
            <person name="Chlastakova A."/>
            <person name="Kascakova B."/>
            <person name="Kotal J."/>
            <person name="Langhansova H."/>
            <person name="Kotsyfakis M."/>
            <person name="Kuta Smatanova I."/>
            <person name="Tirloni L."/>
            <person name="Chmelar J."/>
        </authorList>
    </citation>
    <scope>INTERACTION WITH TICK IRIPIN-1</scope>
</reference>
<reference key="15">
    <citation type="journal article" date="2003" name="Thromb. Haemost.">
        <title>Severe prekallikrein (Fletcher factor) deficiency due to a compound heterozygosis (383Trp stop codon and Cys529Tyr).</title>
        <authorList>
            <person name="Lombardi A.M."/>
            <person name="Sartori M.T."/>
            <person name="Cabrio L."/>
            <person name="Fadin M."/>
            <person name="Zanon E."/>
            <person name="Girolami A."/>
        </authorList>
    </citation>
    <scope>INVOLVEMENT IN PKKD</scope>
    <scope>VARIANTS PKKD 402-TRP--ALA-638 DEL AND TYR-548</scope>
    <scope>CHARACTERIZATION OF VARIANTS PKKD 402-TRP--ALA-638 DEL AND TYR-548</scope>
    <scope>TISSUE SPECIFICITY</scope>
</reference>
<reference key="16">
    <citation type="journal article" date="2007" name="Eur. J. Haematol.">
        <title>A new type of plasma prekallikrein deficiency associated with homozygosity for Gly104Arg and Asn124Ser in apple domain 2 of the heavy-chain region.</title>
        <authorList>
            <person name="Katsuda I."/>
            <person name="Maruyama F."/>
            <person name="Ezaki K."/>
            <person name="Sawamura T."/>
            <person name="Ichihara Y."/>
        </authorList>
    </citation>
    <scope>INVOLVEMENT IN PKKD</scope>
    <scope>VARIANT PKKD ARG-123</scope>
    <scope>VARIANT ASN-143</scope>
    <scope>TISSUE SPECIFICITY</scope>
</reference>
<reference key="17">
    <citation type="journal article" date="2022" name="Int. J. Lab. Hematol.">
        <title>Prekallikrein deficiency due to homozygous KLKB1(+) mutation c.444_445insT (p.Ser151PhefsTer34).</title>
        <authorList>
            <person name="Abraham R.M."/>
            <person name="Viswanathan G.K."/>
            <person name="Dass J."/>
            <person name="Dhawan R."/>
            <person name="Aggarwal M."/>
            <person name="Kumar P."/>
            <person name="Seth T."/>
            <person name="Mahapatra M."/>
        </authorList>
    </citation>
    <scope>INVOLVEMENT IN PKKD</scope>
</reference>
<organism>
    <name type="scientific">Homo sapiens</name>
    <name type="common">Human</name>
    <dbReference type="NCBI Taxonomy" id="9606"/>
    <lineage>
        <taxon>Eukaryota</taxon>
        <taxon>Metazoa</taxon>
        <taxon>Chordata</taxon>
        <taxon>Craniata</taxon>
        <taxon>Vertebrata</taxon>
        <taxon>Euteleostomi</taxon>
        <taxon>Mammalia</taxon>
        <taxon>Eutheria</taxon>
        <taxon>Euarchontoglires</taxon>
        <taxon>Primates</taxon>
        <taxon>Haplorrhini</taxon>
        <taxon>Catarrhini</taxon>
        <taxon>Hominidae</taxon>
        <taxon>Homo</taxon>
    </lineage>
</organism>
<name>KLKB1_HUMAN</name>
<protein>
    <recommendedName>
        <fullName>Plasma kallikrein</fullName>
        <ecNumber>3.4.21.34</ecNumber>
    </recommendedName>
    <alternativeName>
        <fullName>Fletcher factor</fullName>
    </alternativeName>
    <alternativeName>
        <fullName>Kininogenin</fullName>
    </alternativeName>
    <alternativeName>
        <fullName>Plasma prekallikrein</fullName>
        <shortName>PKK</shortName>
    </alternativeName>
    <component>
        <recommendedName>
            <fullName>Plasma kallikrein heavy chain</fullName>
        </recommendedName>
    </component>
    <component>
        <recommendedName>
            <fullName>Plasma kallikrein light chain</fullName>
        </recommendedName>
    </component>
</protein>